<organism>
    <name type="scientific">Arabidopsis thaliana</name>
    <name type="common">Mouse-ear cress</name>
    <dbReference type="NCBI Taxonomy" id="3702"/>
    <lineage>
        <taxon>Eukaryota</taxon>
        <taxon>Viridiplantae</taxon>
        <taxon>Streptophyta</taxon>
        <taxon>Embryophyta</taxon>
        <taxon>Tracheophyta</taxon>
        <taxon>Spermatophyta</taxon>
        <taxon>Magnoliopsida</taxon>
        <taxon>eudicotyledons</taxon>
        <taxon>Gunneridae</taxon>
        <taxon>Pentapetalae</taxon>
        <taxon>rosids</taxon>
        <taxon>malvids</taxon>
        <taxon>Brassicales</taxon>
        <taxon>Brassicaceae</taxon>
        <taxon>Camelineae</taxon>
        <taxon>Arabidopsis</taxon>
    </lineage>
</organism>
<protein>
    <recommendedName>
        <fullName>65 kDa cell wall protein</fullName>
    </recommendedName>
</protein>
<reference evidence="3" key="1">
    <citation type="journal article" date="1997" name="J. Biol. Chem.">
        <title>Differential extraction and protein sequencing reveals major differences in patterns of primary cell wall proteins from plants.</title>
        <authorList>
            <person name="Robertson D."/>
            <person name="Mitchell G.P."/>
            <person name="Gilroy J.S."/>
            <person name="Gerrish C."/>
            <person name="Bolwell G.P."/>
            <person name="Slabas A.R."/>
        </authorList>
    </citation>
    <scope>PROTEIN SEQUENCE</scope>
    <scope>SUBCELLULAR LOCATION</scope>
    <source>
        <strain>cv. Landsberg erecta</strain>
    </source>
</reference>
<dbReference type="GO" id="GO:0005576">
    <property type="term" value="C:extracellular region"/>
    <property type="evidence" value="ECO:0007669"/>
    <property type="project" value="UniProtKB-KW"/>
</dbReference>
<proteinExistence type="evidence at protein level"/>
<comment type="subcellular location">
    <subcellularLocation>
        <location evidence="1">Secreted</location>
        <location evidence="1">Cell wall</location>
    </subcellularLocation>
</comment>
<evidence type="ECO:0000269" key="1">
    <source>
    </source>
</evidence>
<evidence type="ECO:0000303" key="2">
    <source>
    </source>
</evidence>
<evidence type="ECO:0000305" key="3"/>
<accession>P80826</accession>
<sequence>EDRTY</sequence>
<keyword id="KW-0134">Cell wall</keyword>
<keyword id="KW-0903">Direct protein sequencing</keyword>
<keyword id="KW-0964">Secreted</keyword>
<feature type="chain" id="PRO_0000079623" description="65 kDa cell wall protein">
    <location>
        <begin position="1"/>
        <end position="5" status="greater than"/>
    </location>
</feature>
<feature type="non-terminal residue" evidence="2">
    <location>
        <position position="5"/>
    </location>
</feature>
<name>CWP02_ARATH</name>